<evidence type="ECO:0000250" key="1"/>
<evidence type="ECO:0000255" key="2"/>
<evidence type="ECO:0000305" key="3"/>
<comment type="subcellular location">
    <subcellularLocation>
        <location evidence="3">Secreted</location>
    </subcellularLocation>
</comment>
<comment type="similarity">
    <text evidence="3">Belongs to the Ole e I family.</text>
</comment>
<keyword id="KW-1015">Disulfide bond</keyword>
<keyword id="KW-0964">Secreted</keyword>
<keyword id="KW-0732">Signal</keyword>
<name>OLEE1_BETPN</name>
<accession>O49813</accession>
<sequence length="166" mass="18384">MAKSIIIQAPALCFLSLLGFAYSESRFFVEGKVYCDNCRTQFVTKLSTYMKGAKVSLECRNREGGTLIYSSDSETDKSGTYRIPVDGDHEEEICEIALKKSSDPDCSEVSKDPFLKKSARISLTKNNGISTPVRLANPLGFMKKKPLPECAKALRELGMNPDDVIQ</sequence>
<protein>
    <recommendedName>
        <fullName>Olee1-like protein</fullName>
    </recommendedName>
</protein>
<proteinExistence type="evidence at transcript level"/>
<dbReference type="EMBL" id="Y14038">
    <property type="protein sequence ID" value="CAA74365.1"/>
    <property type="molecule type" value="mRNA"/>
</dbReference>
<dbReference type="SMR" id="O49813"/>
<dbReference type="GO" id="GO:0005615">
    <property type="term" value="C:extracellular space"/>
    <property type="evidence" value="ECO:0007669"/>
    <property type="project" value="InterPro"/>
</dbReference>
<dbReference type="InterPro" id="IPR006040">
    <property type="entry name" value="Allergen_Ole_e_I_CS"/>
</dbReference>
<dbReference type="InterPro" id="IPR006041">
    <property type="entry name" value="Pollen_Ole_e1_allergen"/>
</dbReference>
<dbReference type="PANTHER" id="PTHR31614:SF2">
    <property type="entry name" value="F28N24.16 PROTEIN"/>
    <property type="match status" value="1"/>
</dbReference>
<dbReference type="PANTHER" id="PTHR31614">
    <property type="entry name" value="PROTEIN DOWNSTREAM OF FLC-RELATED"/>
    <property type="match status" value="1"/>
</dbReference>
<dbReference type="Pfam" id="PF01190">
    <property type="entry name" value="Pollen_Ole_e_1"/>
    <property type="match status" value="1"/>
</dbReference>
<dbReference type="PROSITE" id="PS00925">
    <property type="entry name" value="OLEEI"/>
    <property type="match status" value="1"/>
</dbReference>
<organism>
    <name type="scientific">Betula pendula</name>
    <name type="common">European white birch</name>
    <name type="synonym">Betula verrucosa</name>
    <dbReference type="NCBI Taxonomy" id="3505"/>
    <lineage>
        <taxon>Eukaryota</taxon>
        <taxon>Viridiplantae</taxon>
        <taxon>Streptophyta</taxon>
        <taxon>Embryophyta</taxon>
        <taxon>Tracheophyta</taxon>
        <taxon>Spermatophyta</taxon>
        <taxon>Magnoliopsida</taxon>
        <taxon>eudicotyledons</taxon>
        <taxon>Gunneridae</taxon>
        <taxon>Pentapetalae</taxon>
        <taxon>rosids</taxon>
        <taxon>fabids</taxon>
        <taxon>Fagales</taxon>
        <taxon>Betulaceae</taxon>
        <taxon>Betula</taxon>
    </lineage>
</organism>
<feature type="signal peptide" evidence="2">
    <location>
        <begin position="1"/>
        <end position="23"/>
    </location>
</feature>
<feature type="chain" id="PRO_0000020071" description="Olee1-like protein">
    <location>
        <begin position="24"/>
        <end position="166"/>
    </location>
</feature>
<feature type="disulfide bond" evidence="1">
    <location>
        <begin position="35"/>
        <end position="106"/>
    </location>
</feature>
<feature type="disulfide bond" evidence="1">
    <location>
        <begin position="38"/>
        <end position="150"/>
    </location>
</feature>
<feature type="disulfide bond" evidence="1">
    <location>
        <begin position="59"/>
        <end position="94"/>
    </location>
</feature>
<reference key="1">
    <citation type="submission" date="1997-06" db="EMBL/GenBank/DDBJ databases">
        <authorList>
            <person name="Friedl-Hajek R."/>
        </authorList>
    </citation>
    <scope>NUCLEOTIDE SEQUENCE [MRNA]</scope>
</reference>